<sequence>MNTVIYPGTFDPITNGHKDLIARASRIFDKVVVAVAASPKKNPLFSLEERVDLVRQVVKPFPNVDVKGFSNLLADFVQQNQANIILRGLRAVSDFEYEFQLADMNRKLAPNVESLFLTPANHLSYISSTLIREIAALGGDVTEFVDPIVSKALQQQFALRK</sequence>
<accession>Q2SN79</accession>
<dbReference type="EC" id="2.7.7.3" evidence="1"/>
<dbReference type="EMBL" id="CP000155">
    <property type="protein sequence ID" value="ABC27895.1"/>
    <property type="molecule type" value="Genomic_DNA"/>
</dbReference>
<dbReference type="RefSeq" id="WP_011394970.1">
    <property type="nucleotide sequence ID" value="NC_007645.1"/>
</dbReference>
<dbReference type="SMR" id="Q2SN79"/>
<dbReference type="STRING" id="349521.HCH_01010"/>
<dbReference type="KEGG" id="hch:HCH_01010"/>
<dbReference type="eggNOG" id="COG0669">
    <property type="taxonomic scope" value="Bacteria"/>
</dbReference>
<dbReference type="HOGENOM" id="CLU_100149_0_1_6"/>
<dbReference type="OrthoDB" id="9806661at2"/>
<dbReference type="UniPathway" id="UPA00241">
    <property type="reaction ID" value="UER00355"/>
</dbReference>
<dbReference type="Proteomes" id="UP000000238">
    <property type="component" value="Chromosome"/>
</dbReference>
<dbReference type="GO" id="GO:0005737">
    <property type="term" value="C:cytoplasm"/>
    <property type="evidence" value="ECO:0007669"/>
    <property type="project" value="UniProtKB-SubCell"/>
</dbReference>
<dbReference type="GO" id="GO:0005524">
    <property type="term" value="F:ATP binding"/>
    <property type="evidence" value="ECO:0007669"/>
    <property type="project" value="UniProtKB-KW"/>
</dbReference>
<dbReference type="GO" id="GO:0004595">
    <property type="term" value="F:pantetheine-phosphate adenylyltransferase activity"/>
    <property type="evidence" value="ECO:0007669"/>
    <property type="project" value="UniProtKB-UniRule"/>
</dbReference>
<dbReference type="GO" id="GO:0015937">
    <property type="term" value="P:coenzyme A biosynthetic process"/>
    <property type="evidence" value="ECO:0007669"/>
    <property type="project" value="UniProtKB-UniRule"/>
</dbReference>
<dbReference type="CDD" id="cd02163">
    <property type="entry name" value="PPAT"/>
    <property type="match status" value="1"/>
</dbReference>
<dbReference type="Gene3D" id="3.40.50.620">
    <property type="entry name" value="HUPs"/>
    <property type="match status" value="1"/>
</dbReference>
<dbReference type="HAMAP" id="MF_00151">
    <property type="entry name" value="PPAT_bact"/>
    <property type="match status" value="1"/>
</dbReference>
<dbReference type="InterPro" id="IPR004821">
    <property type="entry name" value="Cyt_trans-like"/>
</dbReference>
<dbReference type="InterPro" id="IPR001980">
    <property type="entry name" value="PPAT"/>
</dbReference>
<dbReference type="InterPro" id="IPR014729">
    <property type="entry name" value="Rossmann-like_a/b/a_fold"/>
</dbReference>
<dbReference type="NCBIfam" id="TIGR01510">
    <property type="entry name" value="coaD_prev_kdtB"/>
    <property type="match status" value="1"/>
</dbReference>
<dbReference type="NCBIfam" id="TIGR00125">
    <property type="entry name" value="cyt_tran_rel"/>
    <property type="match status" value="1"/>
</dbReference>
<dbReference type="PANTHER" id="PTHR21342">
    <property type="entry name" value="PHOSPHOPANTETHEINE ADENYLYLTRANSFERASE"/>
    <property type="match status" value="1"/>
</dbReference>
<dbReference type="PANTHER" id="PTHR21342:SF1">
    <property type="entry name" value="PHOSPHOPANTETHEINE ADENYLYLTRANSFERASE"/>
    <property type="match status" value="1"/>
</dbReference>
<dbReference type="Pfam" id="PF01467">
    <property type="entry name" value="CTP_transf_like"/>
    <property type="match status" value="1"/>
</dbReference>
<dbReference type="PRINTS" id="PR01020">
    <property type="entry name" value="LPSBIOSNTHSS"/>
</dbReference>
<dbReference type="SUPFAM" id="SSF52374">
    <property type="entry name" value="Nucleotidylyl transferase"/>
    <property type="match status" value="1"/>
</dbReference>
<feature type="chain" id="PRO_1000011156" description="Phosphopantetheine adenylyltransferase">
    <location>
        <begin position="1"/>
        <end position="161"/>
    </location>
</feature>
<feature type="binding site" evidence="1">
    <location>
        <begin position="9"/>
        <end position="10"/>
    </location>
    <ligand>
        <name>ATP</name>
        <dbReference type="ChEBI" id="CHEBI:30616"/>
    </ligand>
</feature>
<feature type="binding site" evidence="1">
    <location>
        <position position="9"/>
    </location>
    <ligand>
        <name>substrate</name>
    </ligand>
</feature>
<feature type="binding site" evidence="1">
    <location>
        <position position="17"/>
    </location>
    <ligand>
        <name>ATP</name>
        <dbReference type="ChEBI" id="CHEBI:30616"/>
    </ligand>
</feature>
<feature type="binding site" evidence="1">
    <location>
        <position position="41"/>
    </location>
    <ligand>
        <name>substrate</name>
    </ligand>
</feature>
<feature type="binding site" evidence="1">
    <location>
        <position position="73"/>
    </location>
    <ligand>
        <name>substrate</name>
    </ligand>
</feature>
<feature type="binding site" evidence="1">
    <location>
        <position position="87"/>
    </location>
    <ligand>
        <name>substrate</name>
    </ligand>
</feature>
<feature type="binding site" evidence="1">
    <location>
        <begin position="88"/>
        <end position="90"/>
    </location>
    <ligand>
        <name>ATP</name>
        <dbReference type="ChEBI" id="CHEBI:30616"/>
    </ligand>
</feature>
<feature type="binding site" evidence="1">
    <location>
        <position position="98"/>
    </location>
    <ligand>
        <name>ATP</name>
        <dbReference type="ChEBI" id="CHEBI:30616"/>
    </ligand>
</feature>
<feature type="binding site" evidence="1">
    <location>
        <begin position="123"/>
        <end position="129"/>
    </location>
    <ligand>
        <name>ATP</name>
        <dbReference type="ChEBI" id="CHEBI:30616"/>
    </ligand>
</feature>
<feature type="site" description="Transition state stabilizer" evidence="1">
    <location>
        <position position="17"/>
    </location>
</feature>
<keyword id="KW-0067">ATP-binding</keyword>
<keyword id="KW-0173">Coenzyme A biosynthesis</keyword>
<keyword id="KW-0963">Cytoplasm</keyword>
<keyword id="KW-0460">Magnesium</keyword>
<keyword id="KW-0547">Nucleotide-binding</keyword>
<keyword id="KW-0548">Nucleotidyltransferase</keyword>
<keyword id="KW-1185">Reference proteome</keyword>
<keyword id="KW-0808">Transferase</keyword>
<reference key="1">
    <citation type="journal article" date="2005" name="Nucleic Acids Res.">
        <title>Genomic blueprint of Hahella chejuensis, a marine microbe producing an algicidal agent.</title>
        <authorList>
            <person name="Jeong H."/>
            <person name="Yim J.H."/>
            <person name="Lee C."/>
            <person name="Choi S.-H."/>
            <person name="Park Y.K."/>
            <person name="Yoon S.H."/>
            <person name="Hur C.-G."/>
            <person name="Kang H.-Y."/>
            <person name="Kim D."/>
            <person name="Lee H.H."/>
            <person name="Park K.H."/>
            <person name="Park S.-H."/>
            <person name="Park H.-S."/>
            <person name="Lee H.K."/>
            <person name="Oh T.K."/>
            <person name="Kim J.F."/>
        </authorList>
    </citation>
    <scope>NUCLEOTIDE SEQUENCE [LARGE SCALE GENOMIC DNA]</scope>
    <source>
        <strain>KCTC 2396</strain>
    </source>
</reference>
<gene>
    <name evidence="1" type="primary">coaD</name>
    <name type="ordered locus">HCH_01010</name>
</gene>
<proteinExistence type="inferred from homology"/>
<name>COAD_HAHCH</name>
<comment type="function">
    <text evidence="1">Reversibly transfers an adenylyl group from ATP to 4'-phosphopantetheine, yielding dephospho-CoA (dPCoA) and pyrophosphate.</text>
</comment>
<comment type="catalytic activity">
    <reaction evidence="1">
        <text>(R)-4'-phosphopantetheine + ATP + H(+) = 3'-dephospho-CoA + diphosphate</text>
        <dbReference type="Rhea" id="RHEA:19801"/>
        <dbReference type="ChEBI" id="CHEBI:15378"/>
        <dbReference type="ChEBI" id="CHEBI:30616"/>
        <dbReference type="ChEBI" id="CHEBI:33019"/>
        <dbReference type="ChEBI" id="CHEBI:57328"/>
        <dbReference type="ChEBI" id="CHEBI:61723"/>
        <dbReference type="EC" id="2.7.7.3"/>
    </reaction>
</comment>
<comment type="cofactor">
    <cofactor evidence="1">
        <name>Mg(2+)</name>
        <dbReference type="ChEBI" id="CHEBI:18420"/>
    </cofactor>
</comment>
<comment type="pathway">
    <text evidence="1">Cofactor biosynthesis; coenzyme A biosynthesis; CoA from (R)-pantothenate: step 4/5.</text>
</comment>
<comment type="subunit">
    <text evidence="1">Homohexamer.</text>
</comment>
<comment type="subcellular location">
    <subcellularLocation>
        <location evidence="1">Cytoplasm</location>
    </subcellularLocation>
</comment>
<comment type="similarity">
    <text evidence="1">Belongs to the bacterial CoaD family.</text>
</comment>
<organism>
    <name type="scientific">Hahella chejuensis (strain KCTC 2396)</name>
    <dbReference type="NCBI Taxonomy" id="349521"/>
    <lineage>
        <taxon>Bacteria</taxon>
        <taxon>Pseudomonadati</taxon>
        <taxon>Pseudomonadota</taxon>
        <taxon>Gammaproteobacteria</taxon>
        <taxon>Oceanospirillales</taxon>
        <taxon>Hahellaceae</taxon>
        <taxon>Hahella</taxon>
    </lineage>
</organism>
<protein>
    <recommendedName>
        <fullName evidence="1">Phosphopantetheine adenylyltransferase</fullName>
        <ecNumber evidence="1">2.7.7.3</ecNumber>
    </recommendedName>
    <alternativeName>
        <fullName evidence="1">Dephospho-CoA pyrophosphorylase</fullName>
    </alternativeName>
    <alternativeName>
        <fullName evidence="1">Pantetheine-phosphate adenylyltransferase</fullName>
        <shortName evidence="1">PPAT</shortName>
    </alternativeName>
</protein>
<evidence type="ECO:0000255" key="1">
    <source>
        <dbReference type="HAMAP-Rule" id="MF_00151"/>
    </source>
</evidence>